<feature type="signal peptide" evidence="2">
    <location>
        <begin position="1"/>
        <end position="34"/>
    </location>
</feature>
<feature type="chain" id="PRO_0000007981" description="Endo-1,4-beta-xylanase A">
    <location>
        <begin position="35"/>
        <end position="684"/>
    </location>
</feature>
<feature type="domain" description="CBM-cenC 1">
    <location>
        <begin position="40"/>
        <end position="190"/>
    </location>
</feature>
<feature type="domain" description="CBM-cenC 2">
    <location>
        <begin position="193"/>
        <end position="342"/>
    </location>
</feature>
<feature type="domain" description="GH10" evidence="3">
    <location>
        <begin position="350"/>
        <end position="678"/>
    </location>
</feature>
<feature type="active site" description="Proton donor" evidence="1">
    <location>
        <position position="490"/>
    </location>
</feature>
<feature type="active site" description="Nucleophile" evidence="4">
    <location>
        <position position="598"/>
    </location>
</feature>
<organism>
    <name type="scientific">Caldicellulosiruptor sp. (strain Rt8B.4)</name>
    <dbReference type="NCBI Taxonomy" id="28238"/>
    <lineage>
        <taxon>Bacteria</taxon>
        <taxon>Bacillati</taxon>
        <taxon>Bacillota</taxon>
        <taxon>Bacillota incertae sedis</taxon>
        <taxon>Caldicellulosiruptorales</taxon>
        <taxon>Caldicellulosiruptoraceae</taxon>
        <taxon>Caldicellulosiruptor</taxon>
    </lineage>
</organism>
<accession>P40944</accession>
<name>XYNA_CALSR</name>
<dbReference type="EC" id="3.2.1.8"/>
<dbReference type="EMBL" id="L18965">
    <property type="protein sequence ID" value="AAB42044.1"/>
    <property type="molecule type" value="Genomic_DNA"/>
</dbReference>
<dbReference type="PIR" id="S41788">
    <property type="entry name" value="S41788"/>
</dbReference>
<dbReference type="SMR" id="P40944"/>
<dbReference type="CAZy" id="CBM22">
    <property type="family name" value="Carbohydrate-Binding Module Family 22"/>
</dbReference>
<dbReference type="CAZy" id="GH10">
    <property type="family name" value="Glycoside Hydrolase Family 10"/>
</dbReference>
<dbReference type="UniPathway" id="UPA00114"/>
<dbReference type="GO" id="GO:0031176">
    <property type="term" value="F:endo-1,4-beta-xylanase activity"/>
    <property type="evidence" value="ECO:0007669"/>
    <property type="project" value="UniProtKB-EC"/>
</dbReference>
<dbReference type="GO" id="GO:0045493">
    <property type="term" value="P:xylan catabolic process"/>
    <property type="evidence" value="ECO:0007669"/>
    <property type="project" value="UniProtKB-UniPathway"/>
</dbReference>
<dbReference type="Gene3D" id="2.60.120.260">
    <property type="entry name" value="Galactose-binding domain-like"/>
    <property type="match status" value="2"/>
</dbReference>
<dbReference type="Gene3D" id="3.20.20.80">
    <property type="entry name" value="Glycosidases"/>
    <property type="match status" value="1"/>
</dbReference>
<dbReference type="InterPro" id="IPR003305">
    <property type="entry name" value="CenC_carb-bd"/>
</dbReference>
<dbReference type="InterPro" id="IPR008979">
    <property type="entry name" value="Galactose-bd-like_sf"/>
</dbReference>
<dbReference type="InterPro" id="IPR044846">
    <property type="entry name" value="GH10"/>
</dbReference>
<dbReference type="InterPro" id="IPR031158">
    <property type="entry name" value="GH10_AS"/>
</dbReference>
<dbReference type="InterPro" id="IPR001000">
    <property type="entry name" value="GH10_dom"/>
</dbReference>
<dbReference type="InterPro" id="IPR017853">
    <property type="entry name" value="Glycoside_hydrolase_SF"/>
</dbReference>
<dbReference type="PANTHER" id="PTHR31490:SF90">
    <property type="entry name" value="ENDO-1,4-BETA-XYLANASE A"/>
    <property type="match status" value="1"/>
</dbReference>
<dbReference type="PANTHER" id="PTHR31490">
    <property type="entry name" value="GLYCOSYL HYDROLASE"/>
    <property type="match status" value="1"/>
</dbReference>
<dbReference type="Pfam" id="PF02018">
    <property type="entry name" value="CBM_4_9"/>
    <property type="match status" value="2"/>
</dbReference>
<dbReference type="Pfam" id="PF00331">
    <property type="entry name" value="Glyco_hydro_10"/>
    <property type="match status" value="1"/>
</dbReference>
<dbReference type="PRINTS" id="PR00134">
    <property type="entry name" value="GLHYDRLASE10"/>
</dbReference>
<dbReference type="SMART" id="SM00633">
    <property type="entry name" value="Glyco_10"/>
    <property type="match status" value="1"/>
</dbReference>
<dbReference type="SUPFAM" id="SSF51445">
    <property type="entry name" value="(Trans)glycosidases"/>
    <property type="match status" value="1"/>
</dbReference>
<dbReference type="SUPFAM" id="SSF49785">
    <property type="entry name" value="Galactose-binding domain-like"/>
    <property type="match status" value="2"/>
</dbReference>
<dbReference type="PROSITE" id="PS00591">
    <property type="entry name" value="GH10_1"/>
    <property type="match status" value="1"/>
</dbReference>
<dbReference type="PROSITE" id="PS51760">
    <property type="entry name" value="GH10_2"/>
    <property type="match status" value="1"/>
</dbReference>
<evidence type="ECO:0000250" key="1"/>
<evidence type="ECO:0000255" key="2"/>
<evidence type="ECO:0000255" key="3">
    <source>
        <dbReference type="PROSITE-ProRule" id="PRU01096"/>
    </source>
</evidence>
<evidence type="ECO:0000255" key="4">
    <source>
        <dbReference type="PROSITE-ProRule" id="PRU10061"/>
    </source>
</evidence>
<evidence type="ECO:0000305" key="5"/>
<protein>
    <recommendedName>
        <fullName>Endo-1,4-beta-xylanase A</fullName>
        <shortName>Xylanase A</shortName>
        <ecNumber>3.2.1.8</ecNumber>
    </recommendedName>
    <alternativeName>
        <fullName>1,4-beta-D-xylan xylanohydrolase A</fullName>
    </alternativeName>
</protein>
<comment type="catalytic activity">
    <reaction>
        <text>Endohydrolysis of (1-&gt;4)-beta-D-xylosidic linkages in xylans.</text>
        <dbReference type="EC" id="3.2.1.8"/>
    </reaction>
</comment>
<comment type="pathway">
    <text>Glycan degradation; xylan degradation.</text>
</comment>
<comment type="similarity">
    <text evidence="5">Belongs to the glycosyl hydrolase 10 (cellulase F) family.</text>
</comment>
<gene>
    <name type="primary">xynA</name>
</gene>
<proteinExistence type="inferred from homology"/>
<keyword id="KW-0119">Carbohydrate metabolism</keyword>
<keyword id="KW-0326">Glycosidase</keyword>
<keyword id="KW-0378">Hydrolase</keyword>
<keyword id="KW-0624">Polysaccharide degradation</keyword>
<keyword id="KW-0677">Repeat</keyword>
<keyword id="KW-0732">Signal</keyword>
<keyword id="KW-0858">Xylan degradation</keyword>
<sequence>MMRSLKSRKLVFILAMLFLINAIVSLKFITYSSANQLASKSKYIEYNFENKSVSPLAKYPSNVVLKVTNSTCAEGTFSVLVAGRKNANDGVIVDITKFLDFSREYEVSFYVLQTTKKLQRISVTLEILDSNDKNQVIAAEKVLLPNIWTKVSAKVQASNYKKAKRINLIVNMPTSKSDSFYIDLFTIKDLENAYVLKQENFENKNTGGFLPEDKNCKITLAKDRAYSSAYSLKVQPSQKTKNGKILFPIKGLLQKGGTYDFSLLVYQDSSKPVNFSAGIKLNDGKSTKEIVLAKQNVAPKKWTQLFATLDLDTRFSAKDVSFFVKPAAAISYYLDLYSISDENWGQPVPDYNLPSLCEKYKNYFKIGVAVPYRALTNPVDVEVIKRHFNSITPENEMKPESLQPYEGGFSFSIADEYVDFCKKDNISLRGHTLVWHQQTPSWFFTNPETGEKLTNSEKDKEILLDRLKKHIQTVVGRYKGKVYAWDVVNEAIDENQPDGYRRSDWYNILGPEYIEKAFIWAHEADPKAKLFYNDYSTEDPYKREFIYKLIKNLKAKGVPVHGVGLQCHISLDWPDVSEIEETVKLFSRIPGLEIHFTEIDISIAKNMTDDDAYNRYLLVQQAQKLKAIFDVLKKYRNVVTSVTFWGLKDDYSWLRGDMPLLSDKDYQPKFAFWSLIDPSVVPKE</sequence>
<reference key="1">
    <citation type="journal article" date="1996" name="Appl. Microbiol. Biotechnol.">
        <title>Cloning, sequencing and overexpression in Escherichia coli of a xylanase gene, xynA from the thermophilic bacterium Rt8B.4 genus Caldicellulosiruptor.</title>
        <authorList>
            <person name="Dwivedi P.P."/>
            <person name="Gibbs M.D."/>
            <person name="Saul D.J."/>
            <person name="Bergquist P.L."/>
        </authorList>
    </citation>
    <scope>NUCLEOTIDE SEQUENCE [GENOMIC DNA]</scope>
</reference>